<reference key="1">
    <citation type="journal article" date="2000" name="Virology">
        <title>Species-specific TT viruses in humans and nonhuman primates and their phylogenetic relatedness.</title>
        <authorList>
            <person name="Okamoto H."/>
            <person name="Nishizawa T."/>
            <person name="Tawara A."/>
            <person name="Peng Y."/>
            <person name="Takahashi M."/>
            <person name="Kishimoto J."/>
            <person name="Tanaka T."/>
            <person name="Miyakawa Y."/>
            <person name="Mayumi M."/>
        </authorList>
    </citation>
    <scope>NUCLEOTIDE SEQUENCE [GENOMIC DNA]</scope>
</reference>
<accession>Q9DUB9</accession>
<organism>
    <name type="scientific">Torque teno tamarin virus (isolate So-TTV2)</name>
    <dbReference type="NCBI Taxonomy" id="766186"/>
    <lineage>
        <taxon>Viruses</taxon>
        <taxon>Viruses incertae sedis</taxon>
        <taxon>Anelloviridae</taxon>
        <taxon>Epsilontorquevirus</taxon>
        <taxon>Epsilontorquevirus calli1</taxon>
    </lineage>
</organism>
<organismHost>
    <name type="scientific">Saguinus imperator</name>
    <name type="common">Emperor tamarin</name>
    <dbReference type="NCBI Taxonomy" id="9491"/>
</organismHost>
<sequence>MTQKDWGEENQGMLTGATWLDECQSAYLWGRKPRHSWADPPESLDNWSFKTHPFHPWRINFTLTPPPETP</sequence>
<dbReference type="EMBL" id="AB041960">
    <property type="protein sequence ID" value="BAB19318.1"/>
    <property type="molecule type" value="Genomic_DNA"/>
</dbReference>
<dbReference type="RefSeq" id="YP_003587882.1">
    <property type="nucleotide sequence ID" value="NC_014085.1"/>
</dbReference>
<dbReference type="KEGG" id="vg:9086645"/>
<dbReference type="Proteomes" id="UP000008780">
    <property type="component" value="Segment"/>
</dbReference>
<keyword id="KW-1185">Reference proteome</keyword>
<proteinExistence type="predicted"/>
<name>ORF4_TTVE1</name>
<feature type="chain" id="PRO_0000404295" description="Uncharacterized ORF4 protein">
    <location>
        <begin position="1"/>
        <end position="70"/>
    </location>
</feature>
<protein>
    <recommendedName>
        <fullName>Uncharacterized ORF4 protein</fullName>
    </recommendedName>
</protein>
<gene>
    <name type="ORF">ORF4</name>
</gene>